<proteinExistence type="evidence at protein level"/>
<protein>
    <recommendedName>
        <fullName evidence="2">Elongation factor Tu</fullName>
        <shortName evidence="2">EF-Tu</shortName>
        <ecNumber evidence="2">3.6.5.3</ecNumber>
    </recommendedName>
</protein>
<reference key="1">
    <citation type="journal article" date="1992" name="Eur. J. Biochem.">
        <title>Sequence of the tufA gene encoding elongation factor EF-Tu from Thermus aquaticus and overproduction of the protein in Escherichia coli.</title>
        <authorList>
            <person name="Voss R.H."/>
            <person name="Hartmann R.K."/>
            <person name="Lippmann C."/>
            <person name="Alexander C."/>
            <person name="Jahn O."/>
            <person name="Erdmann V."/>
        </authorList>
    </citation>
    <scope>NUCLEOTIDE SEQUENCE [GENOMIC DNA]</scope>
    <scope>PROTEIN SEQUENCE OF 2-10</scope>
    <source>
        <strain>EP 00276</strain>
    </source>
</reference>
<reference key="2">
    <citation type="journal article" date="1993" name="Structure">
        <title>The crystal structure of elongation factor EF-Tu from Thermus aquaticus in the GTP conformation.</title>
        <authorList>
            <person name="Kjeldgaard M."/>
            <person name="Nissen P."/>
            <person name="Thirup S."/>
            <person name="Nyborg J."/>
        </authorList>
    </citation>
    <scope>X-RAY CRYSTALLOGRAPHY (2.5 ANGSTROMS)</scope>
    <source>
        <strain>ATCC 25104 / DSM 625 / JCM 10724 / NBRC 103206 / NCIMB 11243 / YT-1</strain>
    </source>
</reference>
<reference key="3">
    <citation type="journal article" date="1995" name="Science">
        <title>Crystal structure of the ternary complex of Phe-tRNAPhe, EF-Tu, and a GTP analog.</title>
        <authorList>
            <person name="Nissen P."/>
            <person name="Kjeldgaard M."/>
            <person name="Thirup S."/>
            <person name="Polekhina G."/>
            <person name="Reshetnikova L."/>
            <person name="Clark B.F.C."/>
            <person name="Nyborg J."/>
        </authorList>
    </citation>
    <scope>X-RAY CRYSTALLOGRAPHY (2.7 ANGSTROMS)</scope>
    <source>
        <strain>ATCC 25104 / DSM 625 / JCM 10724 / NBRC 103206 / NCIMB 11243 / YT-1</strain>
    </source>
</reference>
<reference key="4">
    <citation type="journal article" date="1996" name="Structure">
        <title>Helix unwinding in the effector region of elongation factor EF-Tu-GDP.</title>
        <authorList>
            <person name="Polekhina G."/>
            <person name="Thirup S."/>
            <person name="Kjeldgaard M."/>
            <person name="Nissen P."/>
            <person name="Lippmann C."/>
            <person name="Nyborg J."/>
        </authorList>
    </citation>
    <scope>X-RAY CRYSTALLOGRAPHY (2.7 ANGSTROMS)</scope>
</reference>
<gene>
    <name evidence="2" type="primary">tuf</name>
    <name type="synonym">tufA</name>
</gene>
<name>EFTU_THEAQ</name>
<accession>Q01698</accession>
<comment type="function">
    <text evidence="2">GTP hydrolase that promotes the GTP-dependent binding of aminoacyl-tRNA to the A-site of ribosomes during protein biosynthesis.</text>
</comment>
<comment type="catalytic activity">
    <reaction evidence="2">
        <text>GTP + H2O = GDP + phosphate + H(+)</text>
        <dbReference type="Rhea" id="RHEA:19669"/>
        <dbReference type="ChEBI" id="CHEBI:15377"/>
        <dbReference type="ChEBI" id="CHEBI:15378"/>
        <dbReference type="ChEBI" id="CHEBI:37565"/>
        <dbReference type="ChEBI" id="CHEBI:43474"/>
        <dbReference type="ChEBI" id="CHEBI:58189"/>
        <dbReference type="EC" id="3.6.5.3"/>
    </reaction>
    <physiologicalReaction direction="left-to-right" evidence="2">
        <dbReference type="Rhea" id="RHEA:19670"/>
    </physiologicalReaction>
</comment>
<comment type="subunit">
    <text evidence="2">Monomer.</text>
</comment>
<comment type="subcellular location">
    <subcellularLocation>
        <location>Cytoplasm</location>
    </subcellularLocation>
</comment>
<comment type="similarity">
    <text evidence="2">Belongs to the TRAFAC class translation factor GTPase superfamily. Classic translation factor GTPase family. EF-Tu/EF-1A subfamily.</text>
</comment>
<sequence>MAKGEFIRTKPHVNVGTIGHVDHGKTTLTAALTYVAAAENPNVEVKDYGDIDKAPEERARGITINTAHVEYETAKRHYSHVDCPGHADYIKNMITGAAQMDGAILVVSAADGPMPQTREHILLARQVGVPYIVVFMNKVDMVDDPELLDLVEMEVRDLLNQYEFPGDEVPVIRGSALLALEEMHKNPKTKRGENEWVDKIWELLDAIDEYIPTPVRDVDKPFLMPVEDVFTITGRGTVATGRIERGKVKVGDEVEIVGLAPETRKTVVTGVEMHRKTLQEGIAGDNVGLLLRGVSREEVERGQVLAKPGSITPHTKFEASVYILKKEEGGRHTGFFTGYRPQFYFRTTDVTGVVRLPQGVEMVMPGDNVTFTVELIKPVALEEGLRFAIREGGRTVGAGVVTKILE</sequence>
<evidence type="ECO:0000250" key="1"/>
<evidence type="ECO:0000255" key="2">
    <source>
        <dbReference type="HAMAP-Rule" id="MF_00118"/>
    </source>
</evidence>
<evidence type="ECO:0000269" key="3">
    <source>
    </source>
</evidence>
<evidence type="ECO:0007829" key="4">
    <source>
        <dbReference type="PDB" id="1B23"/>
    </source>
</evidence>
<evidence type="ECO:0007829" key="5">
    <source>
        <dbReference type="PDB" id="1EFT"/>
    </source>
</evidence>
<evidence type="ECO:0007829" key="6">
    <source>
        <dbReference type="PDB" id="1OB5"/>
    </source>
</evidence>
<keyword id="KW-0002">3D-structure</keyword>
<keyword id="KW-0963">Cytoplasm</keyword>
<keyword id="KW-0903">Direct protein sequencing</keyword>
<keyword id="KW-0251">Elongation factor</keyword>
<keyword id="KW-0342">GTP-binding</keyword>
<keyword id="KW-0378">Hydrolase</keyword>
<keyword id="KW-0460">Magnesium</keyword>
<keyword id="KW-0479">Metal-binding</keyword>
<keyword id="KW-0547">Nucleotide-binding</keyword>
<keyword id="KW-0648">Protein biosynthesis</keyword>
<feature type="initiator methionine" description="Removed" evidence="3">
    <location>
        <position position="1"/>
    </location>
</feature>
<feature type="chain" id="PRO_0000091420" description="Elongation factor Tu">
    <location>
        <begin position="2"/>
        <end position="406"/>
    </location>
</feature>
<feature type="domain" description="tr-type G">
    <location>
        <begin position="10"/>
        <end position="215"/>
    </location>
</feature>
<feature type="region of interest" description="G1" evidence="1">
    <location>
        <begin position="19"/>
        <end position="26"/>
    </location>
</feature>
<feature type="region of interest" description="G2" evidence="1">
    <location>
        <begin position="61"/>
        <end position="65"/>
    </location>
</feature>
<feature type="region of interest" description="G3" evidence="1">
    <location>
        <begin position="82"/>
        <end position="85"/>
    </location>
</feature>
<feature type="region of interest" description="G4" evidence="1">
    <location>
        <begin position="137"/>
        <end position="140"/>
    </location>
</feature>
<feature type="region of interest" description="G5" evidence="1">
    <location>
        <begin position="175"/>
        <end position="177"/>
    </location>
</feature>
<feature type="binding site">
    <location>
        <begin position="19"/>
        <end position="26"/>
    </location>
    <ligand>
        <name>GTP</name>
        <dbReference type="ChEBI" id="CHEBI:37565"/>
    </ligand>
</feature>
<feature type="binding site" evidence="2">
    <location>
        <position position="26"/>
    </location>
    <ligand>
        <name>Mg(2+)</name>
        <dbReference type="ChEBI" id="CHEBI:18420"/>
    </ligand>
</feature>
<feature type="binding site">
    <location>
        <begin position="82"/>
        <end position="86"/>
    </location>
    <ligand>
        <name>GTP</name>
        <dbReference type="ChEBI" id="CHEBI:37565"/>
    </ligand>
</feature>
<feature type="binding site">
    <location>
        <begin position="137"/>
        <end position="140"/>
    </location>
    <ligand>
        <name>GTP</name>
        <dbReference type="ChEBI" id="CHEBI:37565"/>
    </ligand>
</feature>
<feature type="strand" evidence="5">
    <location>
        <begin position="12"/>
        <end position="18"/>
    </location>
</feature>
<feature type="helix" evidence="5">
    <location>
        <begin position="25"/>
        <end position="37"/>
    </location>
</feature>
<feature type="strand" evidence="6">
    <location>
        <begin position="41"/>
        <end position="43"/>
    </location>
</feature>
<feature type="helix" evidence="5">
    <location>
        <begin position="48"/>
        <end position="50"/>
    </location>
</feature>
<feature type="helix" evidence="5">
    <location>
        <begin position="55"/>
        <end position="60"/>
    </location>
</feature>
<feature type="strand" evidence="5">
    <location>
        <begin position="67"/>
        <end position="72"/>
    </location>
</feature>
<feature type="strand" evidence="5">
    <location>
        <begin position="77"/>
        <end position="82"/>
    </location>
</feature>
<feature type="helix" evidence="5">
    <location>
        <begin position="87"/>
        <end position="89"/>
    </location>
</feature>
<feature type="helix" evidence="5">
    <location>
        <begin position="90"/>
        <end position="97"/>
    </location>
</feature>
<feature type="strand" evidence="5">
    <location>
        <begin position="101"/>
        <end position="108"/>
    </location>
</feature>
<feature type="turn" evidence="5">
    <location>
        <begin position="109"/>
        <end position="111"/>
    </location>
</feature>
<feature type="helix" evidence="5">
    <location>
        <begin position="115"/>
        <end position="125"/>
    </location>
</feature>
<feature type="turn" evidence="5">
    <location>
        <begin position="126"/>
        <end position="128"/>
    </location>
</feature>
<feature type="strand" evidence="5">
    <location>
        <begin position="132"/>
        <end position="137"/>
    </location>
</feature>
<feature type="helix" evidence="5">
    <location>
        <begin position="139"/>
        <end position="141"/>
    </location>
</feature>
<feature type="helix" evidence="5">
    <location>
        <begin position="147"/>
        <end position="160"/>
    </location>
</feature>
<feature type="turn" evidence="5">
    <location>
        <begin position="161"/>
        <end position="163"/>
    </location>
</feature>
<feature type="turn" evidence="5">
    <location>
        <begin position="166"/>
        <end position="168"/>
    </location>
</feature>
<feature type="strand" evidence="5">
    <location>
        <begin position="171"/>
        <end position="173"/>
    </location>
</feature>
<feature type="helix" evidence="5">
    <location>
        <begin position="176"/>
        <end position="185"/>
    </location>
</feature>
<feature type="turn" evidence="5">
    <location>
        <begin position="191"/>
        <end position="193"/>
    </location>
</feature>
<feature type="helix" evidence="5">
    <location>
        <begin position="195"/>
        <end position="210"/>
    </location>
</feature>
<feature type="strand" evidence="5">
    <location>
        <begin position="218"/>
        <end position="220"/>
    </location>
</feature>
<feature type="strand" evidence="5">
    <location>
        <begin position="223"/>
        <end position="232"/>
    </location>
</feature>
<feature type="turn" evidence="5">
    <location>
        <begin position="233"/>
        <end position="235"/>
    </location>
</feature>
<feature type="strand" evidence="5">
    <location>
        <begin position="236"/>
        <end position="242"/>
    </location>
</feature>
<feature type="strand" evidence="5">
    <location>
        <begin position="245"/>
        <end position="249"/>
    </location>
</feature>
<feature type="strand" evidence="5">
    <location>
        <begin position="253"/>
        <end position="256"/>
    </location>
</feature>
<feature type="strand" evidence="5">
    <location>
        <begin position="258"/>
        <end position="262"/>
    </location>
</feature>
<feature type="strand" evidence="5">
    <location>
        <begin position="264"/>
        <end position="273"/>
    </location>
</feature>
<feature type="strand" evidence="5">
    <location>
        <begin position="276"/>
        <end position="282"/>
    </location>
</feature>
<feature type="strand" evidence="5">
    <location>
        <begin position="286"/>
        <end position="291"/>
    </location>
</feature>
<feature type="turn" evidence="4">
    <location>
        <begin position="296"/>
        <end position="298"/>
    </location>
</feature>
<feature type="strand" evidence="5">
    <location>
        <begin position="304"/>
        <end position="307"/>
    </location>
</feature>
<feature type="turn" evidence="4">
    <location>
        <begin position="308"/>
        <end position="310"/>
    </location>
</feature>
<feature type="strand" evidence="5">
    <location>
        <begin position="314"/>
        <end position="323"/>
    </location>
</feature>
<feature type="helix" evidence="5">
    <location>
        <begin position="326"/>
        <end position="328"/>
    </location>
</feature>
<feature type="strand" evidence="5">
    <location>
        <begin position="342"/>
        <end position="345"/>
    </location>
</feature>
<feature type="strand" evidence="5">
    <location>
        <begin position="348"/>
        <end position="355"/>
    </location>
</feature>
<feature type="strand" evidence="5">
    <location>
        <begin position="368"/>
        <end position="379"/>
    </location>
</feature>
<feature type="strand" evidence="5">
    <location>
        <begin position="386"/>
        <end position="391"/>
    </location>
</feature>
<feature type="strand" evidence="5">
    <location>
        <begin position="394"/>
        <end position="404"/>
    </location>
</feature>
<dbReference type="EC" id="3.6.5.3" evidence="2"/>
<dbReference type="EMBL" id="X66322">
    <property type="protein sequence ID" value="CAA46998.1"/>
    <property type="molecule type" value="Genomic_DNA"/>
</dbReference>
<dbReference type="PIR" id="S29293">
    <property type="entry name" value="S29293"/>
</dbReference>
<dbReference type="RefSeq" id="WP_003043841.1">
    <property type="nucleotide sequence ID" value="NZ_LHCI01000106.1"/>
</dbReference>
<dbReference type="PDB" id="1B23">
    <property type="method" value="X-ray"/>
    <property type="resolution" value="2.60 A"/>
    <property type="chains" value="P=2-406"/>
</dbReference>
<dbReference type="PDB" id="1EFT">
    <property type="method" value="X-ray"/>
    <property type="resolution" value="2.50 A"/>
    <property type="chains" value="A=2-406"/>
</dbReference>
<dbReference type="PDB" id="1MJ1">
    <property type="method" value="EM"/>
    <property type="resolution" value="13.00 A"/>
    <property type="chains" value="A=2-406"/>
</dbReference>
<dbReference type="PDB" id="1OB5">
    <property type="method" value="X-ray"/>
    <property type="resolution" value="3.10 A"/>
    <property type="chains" value="A/C/E=2-406"/>
</dbReference>
<dbReference type="PDB" id="1TTT">
    <property type="method" value="X-ray"/>
    <property type="resolution" value="2.70 A"/>
    <property type="chains" value="A/B/C=2-406"/>
</dbReference>
<dbReference type="PDB" id="1TUI">
    <property type="method" value="X-ray"/>
    <property type="resolution" value="2.70 A"/>
    <property type="chains" value="A/B/C=2-406"/>
</dbReference>
<dbReference type="PDBsum" id="1B23"/>
<dbReference type="PDBsum" id="1EFT"/>
<dbReference type="PDBsum" id="1MJ1"/>
<dbReference type="PDBsum" id="1OB5"/>
<dbReference type="PDBsum" id="1TTT"/>
<dbReference type="PDBsum" id="1TUI"/>
<dbReference type="SMR" id="Q01698"/>
<dbReference type="DrugBank" id="DB08185">
    <property type="generic name" value="2-METHYLTHIO-N6-ISOPENTENYL-ADENOSINE-5'-MONOPHOSPHATE"/>
</dbReference>
<dbReference type="DrugBank" id="DB04315">
    <property type="generic name" value="Guanosine-5'-Diphosphate"/>
</dbReference>
<dbReference type="BRENDA" id="3.6.5.3">
    <property type="organism ID" value="6334"/>
</dbReference>
<dbReference type="EvolutionaryTrace" id="Q01698"/>
<dbReference type="GO" id="GO:0005829">
    <property type="term" value="C:cytosol"/>
    <property type="evidence" value="ECO:0007669"/>
    <property type="project" value="TreeGrafter"/>
</dbReference>
<dbReference type="GO" id="GO:0005525">
    <property type="term" value="F:GTP binding"/>
    <property type="evidence" value="ECO:0007669"/>
    <property type="project" value="UniProtKB-UniRule"/>
</dbReference>
<dbReference type="GO" id="GO:0003924">
    <property type="term" value="F:GTPase activity"/>
    <property type="evidence" value="ECO:0007669"/>
    <property type="project" value="InterPro"/>
</dbReference>
<dbReference type="GO" id="GO:0003746">
    <property type="term" value="F:translation elongation factor activity"/>
    <property type="evidence" value="ECO:0007669"/>
    <property type="project" value="UniProtKB-UniRule"/>
</dbReference>
<dbReference type="CDD" id="cd01884">
    <property type="entry name" value="EF_Tu"/>
    <property type="match status" value="1"/>
</dbReference>
<dbReference type="CDD" id="cd03697">
    <property type="entry name" value="EFTU_II"/>
    <property type="match status" value="1"/>
</dbReference>
<dbReference type="CDD" id="cd03707">
    <property type="entry name" value="EFTU_III"/>
    <property type="match status" value="1"/>
</dbReference>
<dbReference type="FunFam" id="2.40.30.10:FF:000001">
    <property type="entry name" value="Elongation factor Tu"/>
    <property type="match status" value="1"/>
</dbReference>
<dbReference type="FunFam" id="3.40.50.300:FF:000003">
    <property type="entry name" value="Elongation factor Tu"/>
    <property type="match status" value="1"/>
</dbReference>
<dbReference type="Gene3D" id="3.40.50.300">
    <property type="entry name" value="P-loop containing nucleotide triphosphate hydrolases"/>
    <property type="match status" value="1"/>
</dbReference>
<dbReference type="Gene3D" id="2.40.30.10">
    <property type="entry name" value="Translation factors"/>
    <property type="match status" value="2"/>
</dbReference>
<dbReference type="HAMAP" id="MF_00118_B">
    <property type="entry name" value="EF_Tu_B"/>
    <property type="match status" value="1"/>
</dbReference>
<dbReference type="InterPro" id="IPR041709">
    <property type="entry name" value="EF-Tu_GTP-bd"/>
</dbReference>
<dbReference type="InterPro" id="IPR050055">
    <property type="entry name" value="EF-Tu_GTPase"/>
</dbReference>
<dbReference type="InterPro" id="IPR004161">
    <property type="entry name" value="EFTu-like_2"/>
</dbReference>
<dbReference type="InterPro" id="IPR033720">
    <property type="entry name" value="EFTU_2"/>
</dbReference>
<dbReference type="InterPro" id="IPR031157">
    <property type="entry name" value="G_TR_CS"/>
</dbReference>
<dbReference type="InterPro" id="IPR027417">
    <property type="entry name" value="P-loop_NTPase"/>
</dbReference>
<dbReference type="InterPro" id="IPR005225">
    <property type="entry name" value="Small_GTP-bd"/>
</dbReference>
<dbReference type="InterPro" id="IPR000795">
    <property type="entry name" value="T_Tr_GTP-bd_dom"/>
</dbReference>
<dbReference type="InterPro" id="IPR009000">
    <property type="entry name" value="Transl_B-barrel_sf"/>
</dbReference>
<dbReference type="InterPro" id="IPR009001">
    <property type="entry name" value="Transl_elong_EF1A/Init_IF2_C"/>
</dbReference>
<dbReference type="InterPro" id="IPR004541">
    <property type="entry name" value="Transl_elong_EFTu/EF1A_bac/org"/>
</dbReference>
<dbReference type="InterPro" id="IPR004160">
    <property type="entry name" value="Transl_elong_EFTu/EF1A_C"/>
</dbReference>
<dbReference type="NCBIfam" id="TIGR00485">
    <property type="entry name" value="EF-Tu"/>
    <property type="match status" value="1"/>
</dbReference>
<dbReference type="NCBIfam" id="NF000766">
    <property type="entry name" value="PRK00049.1"/>
    <property type="match status" value="1"/>
</dbReference>
<dbReference type="NCBIfam" id="NF009372">
    <property type="entry name" value="PRK12735.1"/>
    <property type="match status" value="1"/>
</dbReference>
<dbReference type="NCBIfam" id="NF009373">
    <property type="entry name" value="PRK12736.1"/>
    <property type="match status" value="1"/>
</dbReference>
<dbReference type="NCBIfam" id="TIGR00231">
    <property type="entry name" value="small_GTP"/>
    <property type="match status" value="1"/>
</dbReference>
<dbReference type="PANTHER" id="PTHR43721:SF22">
    <property type="entry name" value="ELONGATION FACTOR TU, MITOCHONDRIAL"/>
    <property type="match status" value="1"/>
</dbReference>
<dbReference type="PANTHER" id="PTHR43721">
    <property type="entry name" value="ELONGATION FACTOR TU-RELATED"/>
    <property type="match status" value="1"/>
</dbReference>
<dbReference type="Pfam" id="PF00009">
    <property type="entry name" value="GTP_EFTU"/>
    <property type="match status" value="1"/>
</dbReference>
<dbReference type="Pfam" id="PF03144">
    <property type="entry name" value="GTP_EFTU_D2"/>
    <property type="match status" value="1"/>
</dbReference>
<dbReference type="Pfam" id="PF03143">
    <property type="entry name" value="GTP_EFTU_D3"/>
    <property type="match status" value="1"/>
</dbReference>
<dbReference type="PRINTS" id="PR00315">
    <property type="entry name" value="ELONGATNFCT"/>
</dbReference>
<dbReference type="SUPFAM" id="SSF50465">
    <property type="entry name" value="EF-Tu/eEF-1alpha/eIF2-gamma C-terminal domain"/>
    <property type="match status" value="1"/>
</dbReference>
<dbReference type="SUPFAM" id="SSF52540">
    <property type="entry name" value="P-loop containing nucleoside triphosphate hydrolases"/>
    <property type="match status" value="1"/>
</dbReference>
<dbReference type="SUPFAM" id="SSF50447">
    <property type="entry name" value="Translation proteins"/>
    <property type="match status" value="1"/>
</dbReference>
<dbReference type="PROSITE" id="PS00301">
    <property type="entry name" value="G_TR_1"/>
    <property type="match status" value="1"/>
</dbReference>
<dbReference type="PROSITE" id="PS51722">
    <property type="entry name" value="G_TR_2"/>
    <property type="match status" value="1"/>
</dbReference>
<organism>
    <name type="scientific">Thermus aquaticus</name>
    <dbReference type="NCBI Taxonomy" id="271"/>
    <lineage>
        <taxon>Bacteria</taxon>
        <taxon>Thermotogati</taxon>
        <taxon>Deinococcota</taxon>
        <taxon>Deinococci</taxon>
        <taxon>Thermales</taxon>
        <taxon>Thermaceae</taxon>
        <taxon>Thermus</taxon>
    </lineage>
</organism>